<gene>
    <name evidence="1" type="primary">L</name>
</gene>
<dbReference type="EC" id="2.7.7.48" evidence="1"/>
<dbReference type="EC" id="3.1.-.-" evidence="1"/>
<dbReference type="EMBL" id="DQ328876">
    <property type="protein sequence ID" value="ABC71139.1"/>
    <property type="molecule type" value="Genomic_RNA"/>
</dbReference>
<dbReference type="RefSeq" id="YP_516229.1">
    <property type="nucleotide sequence ID" value="NC_007904.1"/>
</dbReference>
<dbReference type="SMR" id="Q27YE5"/>
<dbReference type="GeneID" id="3953123"/>
<dbReference type="KEGG" id="vg:3953123"/>
<dbReference type="Proteomes" id="UP000140987">
    <property type="component" value="Genome"/>
</dbReference>
<dbReference type="GO" id="GO:0030430">
    <property type="term" value="C:host cell cytoplasm"/>
    <property type="evidence" value="ECO:0007669"/>
    <property type="project" value="UniProtKB-SubCell"/>
</dbReference>
<dbReference type="GO" id="GO:0044423">
    <property type="term" value="C:virion component"/>
    <property type="evidence" value="ECO:0007669"/>
    <property type="project" value="UniProtKB-KW"/>
</dbReference>
<dbReference type="GO" id="GO:0016787">
    <property type="term" value="F:hydrolase activity"/>
    <property type="evidence" value="ECO:0007669"/>
    <property type="project" value="UniProtKB-KW"/>
</dbReference>
<dbReference type="GO" id="GO:0046872">
    <property type="term" value="F:metal ion binding"/>
    <property type="evidence" value="ECO:0007669"/>
    <property type="project" value="UniProtKB-KW"/>
</dbReference>
<dbReference type="GO" id="GO:0000166">
    <property type="term" value="F:nucleotide binding"/>
    <property type="evidence" value="ECO:0007669"/>
    <property type="project" value="UniProtKB-UniRule"/>
</dbReference>
<dbReference type="GO" id="GO:0003968">
    <property type="term" value="F:RNA-directed RNA polymerase activity"/>
    <property type="evidence" value="ECO:0007669"/>
    <property type="project" value="UniProtKB-UniRule"/>
</dbReference>
<dbReference type="GO" id="GO:0075526">
    <property type="term" value="P:cap snatching"/>
    <property type="evidence" value="ECO:0007669"/>
    <property type="project" value="UniProtKB-UniRule"/>
</dbReference>
<dbReference type="GO" id="GO:0039689">
    <property type="term" value="P:negative stranded viral RNA replication"/>
    <property type="evidence" value="ECO:0000250"/>
    <property type="project" value="UniProtKB"/>
</dbReference>
<dbReference type="GO" id="GO:0039696">
    <property type="term" value="P:RNA-templated viral transcription"/>
    <property type="evidence" value="ECO:0000250"/>
    <property type="project" value="UniProtKB"/>
</dbReference>
<dbReference type="Gene3D" id="3.30.70.2640">
    <property type="entry name" value="Arenavirus RNA polymerase"/>
    <property type="match status" value="1"/>
</dbReference>
<dbReference type="Gene3D" id="1.20.1440.300">
    <property type="entry name" value="RNA-directed RNA polymerase L, helical domain"/>
    <property type="match status" value="1"/>
</dbReference>
<dbReference type="HAMAP" id="MF_04086">
    <property type="entry name" value="ARENA_L"/>
    <property type="match status" value="1"/>
</dbReference>
<dbReference type="InterPro" id="IPR026382">
    <property type="entry name" value="CapSnatch_arenavir"/>
</dbReference>
<dbReference type="InterPro" id="IPR048006">
    <property type="entry name" value="CapSnatch_bunyavir"/>
</dbReference>
<dbReference type="InterPro" id="IPR007099">
    <property type="entry name" value="RNA-dir_pol_NSvirus"/>
</dbReference>
<dbReference type="InterPro" id="IPR010453">
    <property type="entry name" value="RNA_pol_arenavir"/>
</dbReference>
<dbReference type="NCBIfam" id="TIGR04202">
    <property type="entry name" value="capSnatchArena"/>
    <property type="match status" value="1"/>
</dbReference>
<dbReference type="Pfam" id="PF06317">
    <property type="entry name" value="Arena_RNA_pol"/>
    <property type="match status" value="1"/>
</dbReference>
<dbReference type="Pfam" id="PF17296">
    <property type="entry name" value="ArenaCapSnatch"/>
    <property type="match status" value="1"/>
</dbReference>
<dbReference type="PIRSF" id="PIRSF000836">
    <property type="entry name" value="L_ArenaV"/>
    <property type="match status" value="1"/>
</dbReference>
<dbReference type="PROSITE" id="PS50525">
    <property type="entry name" value="RDRP_SSRNA_NEG_SEG"/>
    <property type="match status" value="1"/>
</dbReference>
<comment type="function">
    <text evidence="1">RNA-dependent RNA polymerase, which is responsible for the replication and transcription of the viral RNA genome using antigenomic RNA as an intermediate. During transcription, synthesizes subgenomic RNAs and assures their capping by a cap-snatching mechanism, which involves the endonuclease activity cleaving the host capped pre-mRNAs. These short capped RNAs are then used as primers for viral transcription. The 3'-end of subgenomic mRNAs molecules are heterogeneous and not polyadenylated. The replicase function is to direct synthesis of antigenomic and genomic RNA which are encapsidated and non capped. As a consequence of the use of the same enzyme for both transcription and replication, these mechanisms need to be well coordinated. These processes may be regulated by proteins N and Z in a dose-dependent manner. Z protein inhibits the viral polymerase L und thus the viral transcription and RNA synthesis.</text>
</comment>
<comment type="catalytic activity">
    <reaction evidence="1">
        <text>RNA(n) + a ribonucleoside 5'-triphosphate = RNA(n+1) + diphosphate</text>
        <dbReference type="Rhea" id="RHEA:21248"/>
        <dbReference type="Rhea" id="RHEA-COMP:14527"/>
        <dbReference type="Rhea" id="RHEA-COMP:17342"/>
        <dbReference type="ChEBI" id="CHEBI:33019"/>
        <dbReference type="ChEBI" id="CHEBI:61557"/>
        <dbReference type="ChEBI" id="CHEBI:140395"/>
        <dbReference type="EC" id="2.7.7.48"/>
    </reaction>
</comment>
<comment type="cofactor">
    <cofactor evidence="1">
        <name>Mn(2+)</name>
        <dbReference type="ChEBI" id="CHEBI:29035"/>
    </cofactor>
    <text evidence="1">For endonuclease activity. Binds 2 Mn(2+) ions in the active site. The divalent metal ions are crucial for catalytic activity.</text>
</comment>
<comment type="cofactor">
    <cofactor evidence="1">
        <name>Mg(2+)</name>
        <dbReference type="ChEBI" id="CHEBI:18420"/>
    </cofactor>
    <cofactor evidence="1">
        <name>Mn(2+)</name>
        <dbReference type="ChEBI" id="CHEBI:29035"/>
    </cofactor>
    <text evidence="1">For polymerase activity.</text>
</comment>
<comment type="subunit">
    <text evidence="1">Homomultimer; the oligomeric structure is essential for the polymerase activity. Interacts with nucleoprotein N. Interacts with protein Z; this interaction inhibits viral transcription and replication, Z partially blocks the product exit tunnel for the releasing nascent RNA product.</text>
</comment>
<comment type="subcellular location">
    <subcellularLocation>
        <location evidence="1">Virion</location>
    </subcellularLocation>
    <subcellularLocation>
        <location evidence="1">Host cytoplasm</location>
    </subcellularLocation>
</comment>
<comment type="domain">
    <text evidence="1">The N-terminus contains the endonuclease activity (endoN). The central region contains the RdRp activity.</text>
</comment>
<comment type="miscellaneous">
    <text evidence="1">Classified as His(-) endonuclease since it does not have a histidine upstream of the active site that coordinates the first cation. His(-) endonucleases display very low activity in vitro, although they are clearly active in vivo.</text>
</comment>
<comment type="similarity">
    <text evidence="1">Belongs to the Bunyavirales RNA polymerase family.</text>
</comment>
<evidence type="ECO:0000255" key="1">
    <source>
        <dbReference type="HAMAP-Rule" id="MF_04086"/>
    </source>
</evidence>
<organism>
    <name type="scientific">Mobala mammarenavirus (isolate Rat/Central African Republic/Acar 3080/1983)</name>
    <name type="common">MOBV</name>
    <dbReference type="NCBI Taxonomy" id="3052325"/>
    <lineage>
        <taxon>Viruses</taxon>
        <taxon>Riboviria</taxon>
        <taxon>Orthornavirae</taxon>
        <taxon>Negarnaviricota</taxon>
        <taxon>Polyploviricotina</taxon>
        <taxon>Ellioviricetes</taxon>
        <taxon>Bunyavirales</taxon>
        <taxon>Arenaviridae</taxon>
        <taxon>Mammarenavirus</taxon>
    </lineage>
</organism>
<name>L_MOBVC</name>
<organismHost>
    <name type="scientific">Praomys</name>
    <name type="common">African soft-furred rats</name>
    <dbReference type="NCBI Taxonomy" id="10111"/>
</organismHost>
<proteinExistence type="inferred from homology"/>
<reference key="1">
    <citation type="journal article" date="2006" name="Virology">
        <title>Phylogeny and evolution of old world arenaviruses.</title>
        <authorList>
            <person name="Emonet S."/>
            <person name="Lemasson J.J."/>
            <person name="Gonzalez J.P."/>
            <person name="de Lamballerie X."/>
            <person name="Charrel R.N."/>
        </authorList>
    </citation>
    <scope>NUCLEOTIDE SEQUENCE [GENOMIC RNA]</scope>
</reference>
<reference key="2">
    <citation type="journal article" date="2008" name="Curr. Opin. Microbiol.">
        <title>Phylogeny of the genus Arenavirus.</title>
        <authorList>
            <person name="Charrel R.N."/>
            <person name="de Lamballerie X."/>
            <person name="Emonet S."/>
        </authorList>
    </citation>
    <scope>NUCLEOTIDE SEQUENCE [GENOMIC RNA]</scope>
</reference>
<reference key="3">
    <citation type="journal article" date="2017" name="Crit. Rev. Microbiol.">
        <title>Bunyaviridae RdRps: structure, motifs, and RNA synthesis machinery.</title>
        <authorList>
            <person name="Amroun A."/>
            <person name="Priet S."/>
            <person name="de Lamballerie X."/>
            <person name="Querat G."/>
        </authorList>
    </citation>
    <scope>REVIEW</scope>
</reference>
<reference key="4">
    <citation type="journal article" date="2020" name="Trends Microbiol.">
        <title>The Cap-Snatching Mechanism of Bunyaviruses.</title>
        <authorList>
            <person name="Olschewski S."/>
            <person name="Cusack S."/>
            <person name="Rosenthal M."/>
        </authorList>
    </citation>
    <scope>REVIEW</scope>
</reference>
<sequence>MEEQISEVKDIISKYLSNDDRLAKQKLAFLVQSEPKLLLIEGLKLLSLCIEIDSCEANGCDHNTKELSVENFLSENRVLCPGLPMVVPDGFKLNGNVLMILECFVRSSPANFEQKYREDLVKLNSLKEDLMTVGITMLPLIDGRTNFQTDRLPEWANERFRTLLFSLLAFSQESSRMFEEAEYSRLCESLNVSGGKRSGIENINILSDHRSEHFDELLKLCHVGINNHMSSLDVKREIIQEFQAFRNKLQNGVIERQFLRVNREELIKAFNEMYTLRVGDKPELLDSLLNDYYHSCPLITMLYCELPNGKSCQSDISHVRGWRSLLNKVKSLRLINTRRKLMLIFDSILLLAHMKDLSVNGHLVESEWMGSSFLSVNDRLVSLPATQKDLKTWLQRRTNRLSHSHQSQSAYEVFSTMVNRVLNKAKEVLLLVNLTFKDYNVDEDILSESSFTEMMSLEVNGVEPTINYEKNPIDRFSYNIQAMDPDNQSDLKRLSSISLALVNSMKTSSTVKLRQNEHGKLRYKCVRCKEAYYQDFLIEGHRLMLIYQKTGECSKCYSVNDAVVGELCSFYADPKRYFPAIFSDSVLQEMIDTMISWLTECSELKEFIKEIKSLLKMVVMVVLTNPTKRIQKFLQNLRYFTMAYVSEYHHKDLLEKLREDLITNCEFLLYRITRSILNIVFNVNVTTMITNRFKFILNLSYLCHLITKETPDRLTDQIKCFEKFIEPKMKFDSVNVNPLEPADQEELRSLLMSADKFLSKPDCFGDEGILFKTPGVSRKIFSMMVSSFNNGSLFKQAELKNGVKDPLVVSGCATALDLASNKSVVVNKYTDGDRIIEYDYDKLVATAVCQLSEVFSRKGKYVLSKEDYDFKIQQIMSDLVIGRSKLHGSEIGLNSCEEVDEVLIEGGAADYFDSIKQSVDTVMSKFSWSGSESSATLKSECSIDDLSLALQDKAQLRLIRNELSCHMVEDFDVMTLPYDTYEEICKSVYSDPSLRSKYFYLESLESCPLTKMAQAVCTRTFHDEEYFQCFKSLLLQMNANKLSGKFNHYKSKCLNFKLDRDRLFNETRISERESNSEALSKALSLTNCTTAALKNLCFYSQESPQSYNSQGPDTGRLKFSLSYKEQVGGNRELYIGDLRTKMFTRLIEDYFEALTSQFKGSCLNDEHEFENAVFSMKFNVSLGLLSYSLDHSKWGPMMTPFLFLATLQNINWPSLDTLSDAKSRDYVSSMLSWHIHKLVEVPFNVVTAMMKSFIKSKLGLKKNLSETMTERFFFEHFRLGKVPSHISSILDKGQGILQNTSDFYGLISERFINYCISCLYEGNVDAFTSSDDQISLFDKSLSDLLEKDPDEFEYILEFHNYLSDQLNKFISPKSVKGNFAAEFKSRFFVWGDEVPLLTKFVAASLHNIKCKEPHQLAETIDTIIDQAVANGVPVKLCNIVQERTLNLLRYAQYPIDPFLMFCSSDVKDWVDGNRGYRIMRNIEMLEPNGTRKVRSFLRRLYNNLKTGLLHEEFTAAYLSGDPYQSLAKLSKIFDTEILNDEELGLSWLNLSAYYPLRMVLRQKVIYTGAVNVEEEKLPTIVKTLQNKLSSNFTRGAQKLLSEAINRSAFQSCIASGFVGLCRTLGSKCVRGPERENFYIKSIMNQSMMMEGVSRELVMGVDVWRVRNPLDNSRAQQKWGNYFRPILWDYLCIALSTALEIGSWVLGEPKLKSPLPQMKFRPCDYFPMKPSVTRLLEDKVGFNHIIHSFRRLYPDIFEKHLLPFMSDLASTKMKWSPRVKFLDLCVMLDVNCEAMSLVSHIVKWKREEHYVILSDELSISHDRSHESLADERVVSTEDVSENFLRQIYFESFARPFVATSRTLGSFTWFPHKTSLPESEGLASLGPFGTFIEKVIFKGIERPMYRHDLFSGYAWLDFDFGEFYINSSKLIQYGLTEMRYFEDLSEFMSMLSSLKPGSIEISLTVNFQVKSQGESLREKFFIHCKFYGSFDVDGKFEFNNIGVQYSGAINRSAVLDCWRLILTNSHFLGDKVIWHLNTANIKDYLKDGSMVGEVVPIEVIINRDALRLDTLDFERVGPDVNVVPLVVKDGYIFEGDKKLVPFNPSIHDQDFEILVKELCIDDKELLKDMIQKMITVRGSQGLQWHSLDIVAVLTKNMPTNYKDFITESLSVLDSWTGFKGYSLCFSKTKNTLMIHTSEGNLRLKGKLCRKLFDDPVHVEDIE</sequence>
<protein>
    <recommendedName>
        <fullName evidence="1">RNA-directed RNA polymerase L</fullName>
        <shortName evidence="1">Protein L</shortName>
        <ecNumber evidence="1">2.7.7.48</ecNumber>
    </recommendedName>
    <alternativeName>
        <fullName evidence="1">Large structural protein</fullName>
    </alternativeName>
    <alternativeName>
        <fullName evidence="1">Replicase</fullName>
    </alternativeName>
    <alternativeName>
        <fullName evidence="1">Transcriptase</fullName>
    </alternativeName>
    <domain>
        <recommendedName>
            <fullName evidence="1">cap-snatching endonuclease</fullName>
            <ecNumber evidence="1">3.1.-.-</ecNumber>
        </recommendedName>
    </domain>
</protein>
<feature type="chain" id="PRO_0000361642" description="RNA-directed RNA polymerase L">
    <location>
        <begin position="1"/>
        <end position="2220"/>
    </location>
</feature>
<feature type="domain" description="RdRp catalytic" evidence="1">
    <location>
        <begin position="1174"/>
        <end position="1370"/>
    </location>
</feature>
<feature type="region of interest" description="Endonuclease" evidence="1">
    <location>
        <begin position="26"/>
        <end position="289"/>
    </location>
</feature>
<feature type="active site" evidence="1">
    <location>
        <position position="115"/>
    </location>
</feature>
<feature type="binding site" evidence="1">
    <location>
        <position position="51"/>
    </location>
    <ligand>
        <name>Mn(2+)</name>
        <dbReference type="ChEBI" id="CHEBI:29035"/>
        <label>1</label>
    </ligand>
</feature>
<feature type="binding site" evidence="1">
    <location>
        <position position="89"/>
    </location>
    <ligand>
        <name>Mn(2+)</name>
        <dbReference type="ChEBI" id="CHEBI:29035"/>
        <label>1</label>
    </ligand>
</feature>
<feature type="binding site" evidence="1">
    <location>
        <position position="89"/>
    </location>
    <ligand>
        <name>Mn(2+)</name>
        <dbReference type="ChEBI" id="CHEBI:29035"/>
        <label>2</label>
    </ligand>
</feature>
<feature type="binding site" evidence="1">
    <location>
        <position position="102"/>
    </location>
    <ligand>
        <name>Mn(2+)</name>
        <dbReference type="ChEBI" id="CHEBI:29035"/>
        <label>1</label>
    </ligand>
</feature>
<feature type="binding site" evidence="1">
    <location>
        <position position="1332"/>
    </location>
    <ligand>
        <name>Mg(2+)</name>
        <dbReference type="ChEBI" id="CHEBI:18420"/>
        <note>catalytic; for RdRp activity</note>
    </ligand>
</feature>
<keyword id="KW-1157">Cap snatching</keyword>
<keyword id="KW-1035">Host cytoplasm</keyword>
<keyword id="KW-0378">Hydrolase</keyword>
<keyword id="KW-0460">Magnesium</keyword>
<keyword id="KW-0464">Manganese</keyword>
<keyword id="KW-0479">Metal-binding</keyword>
<keyword id="KW-0547">Nucleotide-binding</keyword>
<keyword id="KW-0548">Nucleotidyltransferase</keyword>
<keyword id="KW-0696">RNA-directed RNA polymerase</keyword>
<keyword id="KW-0808">Transferase</keyword>
<keyword id="KW-0693">Viral RNA replication</keyword>
<keyword id="KW-0946">Virion</keyword>
<accession>Q27YE5</accession>